<evidence type="ECO:0000255" key="1">
    <source>
        <dbReference type="HAMAP-Rule" id="MF_01384"/>
    </source>
</evidence>
<evidence type="ECO:0000256" key="2">
    <source>
        <dbReference type="SAM" id="MobiDB-lite"/>
    </source>
</evidence>
<comment type="function">
    <text evidence="1">Required for maturation of urease via the functional incorporation of the urease nickel metallocenter.</text>
</comment>
<comment type="subunit">
    <text evidence="1">UreD, UreF and UreG form a complex that acts as a GTP-hydrolysis-dependent molecular chaperone, activating the urease apoprotein by helping to assemble the nickel containing metallocenter of UreC. The UreE protein probably delivers the nickel.</text>
</comment>
<comment type="subcellular location">
    <subcellularLocation>
        <location evidence="1">Cytoplasm</location>
    </subcellularLocation>
</comment>
<comment type="similarity">
    <text evidence="1">Belongs to the UreD family.</text>
</comment>
<sequence>MLNTLEPQPCETDALSPRLQRSTGSARVVMRRKADGTTALADLAQQGCAKAMLPRVHAPVPEVVFLNTAGGVTGGDSLSYRLDLEAGAQATGATQTAERTYRSSAGTGEMRVHLTLGSGARLDWLPQETILFDGSATRRCTEVEMAADATLLWCETLVFGRAAMGEALSRFAFRDDRQVRRDGKLVLWEPLTLDATHLAPRACLGGARAIATVAFLAPDAEAARDTVRRLAPEGVDWAVSAWDGKLVLRAFAPDAQPLKHALAQVLHVLREGASLPRVWQL</sequence>
<gene>
    <name evidence="1" type="primary">ureD</name>
    <name type="ordered locus">Dshi_2370</name>
</gene>
<accession>A8LRS5</accession>
<name>URED_DINSH</name>
<protein>
    <recommendedName>
        <fullName evidence="1">Urease accessory protein UreD</fullName>
    </recommendedName>
</protein>
<feature type="chain" id="PRO_0000340451" description="Urease accessory protein UreD">
    <location>
        <begin position="1"/>
        <end position="281"/>
    </location>
</feature>
<feature type="region of interest" description="Disordered" evidence="2">
    <location>
        <begin position="1"/>
        <end position="25"/>
    </location>
</feature>
<proteinExistence type="inferred from homology"/>
<organism>
    <name type="scientific">Dinoroseobacter shibae (strain DSM 16493 / NCIMB 14021 / DFL 12)</name>
    <dbReference type="NCBI Taxonomy" id="398580"/>
    <lineage>
        <taxon>Bacteria</taxon>
        <taxon>Pseudomonadati</taxon>
        <taxon>Pseudomonadota</taxon>
        <taxon>Alphaproteobacteria</taxon>
        <taxon>Rhodobacterales</taxon>
        <taxon>Roseobacteraceae</taxon>
        <taxon>Dinoroseobacter</taxon>
    </lineage>
</organism>
<reference key="1">
    <citation type="journal article" date="2010" name="ISME J.">
        <title>The complete genome sequence of the algal symbiont Dinoroseobacter shibae: a hitchhiker's guide to life in the sea.</title>
        <authorList>
            <person name="Wagner-Dobler I."/>
            <person name="Ballhausen B."/>
            <person name="Berger M."/>
            <person name="Brinkhoff T."/>
            <person name="Buchholz I."/>
            <person name="Bunk B."/>
            <person name="Cypionka H."/>
            <person name="Daniel R."/>
            <person name="Drepper T."/>
            <person name="Gerdts G."/>
            <person name="Hahnke S."/>
            <person name="Han C."/>
            <person name="Jahn D."/>
            <person name="Kalhoefer D."/>
            <person name="Kiss H."/>
            <person name="Klenk H.P."/>
            <person name="Kyrpides N."/>
            <person name="Liebl W."/>
            <person name="Liesegang H."/>
            <person name="Meincke L."/>
            <person name="Pati A."/>
            <person name="Petersen J."/>
            <person name="Piekarski T."/>
            <person name="Pommerenke C."/>
            <person name="Pradella S."/>
            <person name="Pukall R."/>
            <person name="Rabus R."/>
            <person name="Stackebrandt E."/>
            <person name="Thole S."/>
            <person name="Thompson L."/>
            <person name="Tielen P."/>
            <person name="Tomasch J."/>
            <person name="von Jan M."/>
            <person name="Wanphrut N."/>
            <person name="Wichels A."/>
            <person name="Zech H."/>
            <person name="Simon M."/>
        </authorList>
    </citation>
    <scope>NUCLEOTIDE SEQUENCE [LARGE SCALE GENOMIC DNA]</scope>
    <source>
        <strain>DSM 16493 / NCIMB 14021 / DFL 12</strain>
    </source>
</reference>
<keyword id="KW-0143">Chaperone</keyword>
<keyword id="KW-0963">Cytoplasm</keyword>
<keyword id="KW-0996">Nickel insertion</keyword>
<keyword id="KW-1185">Reference proteome</keyword>
<dbReference type="EMBL" id="CP000830">
    <property type="protein sequence ID" value="ABV94106.1"/>
    <property type="molecule type" value="Genomic_DNA"/>
</dbReference>
<dbReference type="RefSeq" id="WP_012179037.1">
    <property type="nucleotide sequence ID" value="NC_009952.1"/>
</dbReference>
<dbReference type="SMR" id="A8LRS5"/>
<dbReference type="STRING" id="398580.Dshi_2370"/>
<dbReference type="KEGG" id="dsh:Dshi_2370"/>
<dbReference type="eggNOG" id="COG0829">
    <property type="taxonomic scope" value="Bacteria"/>
</dbReference>
<dbReference type="HOGENOM" id="CLU_056339_2_0_5"/>
<dbReference type="OrthoDB" id="9798842at2"/>
<dbReference type="Proteomes" id="UP000006833">
    <property type="component" value="Chromosome"/>
</dbReference>
<dbReference type="GO" id="GO:0005737">
    <property type="term" value="C:cytoplasm"/>
    <property type="evidence" value="ECO:0007669"/>
    <property type="project" value="UniProtKB-SubCell"/>
</dbReference>
<dbReference type="GO" id="GO:0016151">
    <property type="term" value="F:nickel cation binding"/>
    <property type="evidence" value="ECO:0007669"/>
    <property type="project" value="UniProtKB-UniRule"/>
</dbReference>
<dbReference type="HAMAP" id="MF_01384">
    <property type="entry name" value="UreD"/>
    <property type="match status" value="1"/>
</dbReference>
<dbReference type="InterPro" id="IPR002669">
    <property type="entry name" value="UreD"/>
</dbReference>
<dbReference type="PANTHER" id="PTHR33643">
    <property type="entry name" value="UREASE ACCESSORY PROTEIN D"/>
    <property type="match status" value="1"/>
</dbReference>
<dbReference type="PANTHER" id="PTHR33643:SF1">
    <property type="entry name" value="UREASE ACCESSORY PROTEIN D"/>
    <property type="match status" value="1"/>
</dbReference>
<dbReference type="Pfam" id="PF01774">
    <property type="entry name" value="UreD"/>
    <property type="match status" value="1"/>
</dbReference>